<protein>
    <recommendedName>
        <fullName>DegV domain-containing protein CA_C1624</fullName>
    </recommendedName>
</protein>
<dbReference type="EMBL" id="AE001437">
    <property type="protein sequence ID" value="AAK79591.1"/>
    <property type="molecule type" value="Genomic_DNA"/>
</dbReference>
<dbReference type="PIR" id="D97100">
    <property type="entry name" value="D97100"/>
</dbReference>
<dbReference type="RefSeq" id="NP_348251.1">
    <property type="nucleotide sequence ID" value="NC_003030.1"/>
</dbReference>
<dbReference type="RefSeq" id="WP_010964932.1">
    <property type="nucleotide sequence ID" value="NC_003030.1"/>
</dbReference>
<dbReference type="SMR" id="Q97IL6"/>
<dbReference type="STRING" id="272562.CA_C1624"/>
<dbReference type="KEGG" id="cac:CA_C1624"/>
<dbReference type="PATRIC" id="fig|272562.8.peg.1824"/>
<dbReference type="eggNOG" id="COG1307">
    <property type="taxonomic scope" value="Bacteria"/>
</dbReference>
<dbReference type="HOGENOM" id="CLU_048251_4_3_9"/>
<dbReference type="OrthoDB" id="9781230at2"/>
<dbReference type="Proteomes" id="UP000000814">
    <property type="component" value="Chromosome"/>
</dbReference>
<dbReference type="GO" id="GO:0008289">
    <property type="term" value="F:lipid binding"/>
    <property type="evidence" value="ECO:0007669"/>
    <property type="project" value="UniProtKB-KW"/>
</dbReference>
<dbReference type="Gene3D" id="3.30.1180.10">
    <property type="match status" value="1"/>
</dbReference>
<dbReference type="Gene3D" id="3.40.50.10170">
    <property type="match status" value="1"/>
</dbReference>
<dbReference type="InterPro" id="IPR003797">
    <property type="entry name" value="DegV"/>
</dbReference>
<dbReference type="InterPro" id="IPR043168">
    <property type="entry name" value="DegV_C"/>
</dbReference>
<dbReference type="InterPro" id="IPR050270">
    <property type="entry name" value="DegV_domain_contain"/>
</dbReference>
<dbReference type="NCBIfam" id="TIGR00762">
    <property type="entry name" value="DegV"/>
    <property type="match status" value="1"/>
</dbReference>
<dbReference type="PANTHER" id="PTHR33434">
    <property type="entry name" value="DEGV DOMAIN-CONTAINING PROTEIN DR_1986-RELATED"/>
    <property type="match status" value="1"/>
</dbReference>
<dbReference type="PANTHER" id="PTHR33434:SF3">
    <property type="entry name" value="DEGV DOMAIN-CONTAINING PROTEIN YITS"/>
    <property type="match status" value="1"/>
</dbReference>
<dbReference type="Pfam" id="PF02645">
    <property type="entry name" value="DegV"/>
    <property type="match status" value="1"/>
</dbReference>
<dbReference type="SUPFAM" id="SSF82549">
    <property type="entry name" value="DAK1/DegV-like"/>
    <property type="match status" value="1"/>
</dbReference>
<dbReference type="PROSITE" id="PS51482">
    <property type="entry name" value="DEGV"/>
    <property type="match status" value="1"/>
</dbReference>
<keyword id="KW-0446">Lipid-binding</keyword>
<keyword id="KW-1185">Reference proteome</keyword>
<proteinExistence type="inferred from homology"/>
<feature type="chain" id="PRO_0000209755" description="DegV domain-containing protein CA_C1624">
    <location>
        <begin position="1"/>
        <end position="280"/>
    </location>
</feature>
<feature type="domain" description="DegV" evidence="3">
    <location>
        <begin position="4"/>
        <end position="279"/>
    </location>
</feature>
<feature type="binding site" evidence="2">
    <location>
        <position position="60"/>
    </location>
    <ligand>
        <name>hexadecanoate</name>
        <dbReference type="ChEBI" id="CHEBI:7896"/>
    </ligand>
</feature>
<feature type="binding site" evidence="2">
    <location>
        <position position="93"/>
    </location>
    <ligand>
        <name>hexadecanoate</name>
        <dbReference type="ChEBI" id="CHEBI:7896"/>
    </ligand>
</feature>
<organism>
    <name type="scientific">Clostridium acetobutylicum (strain ATCC 824 / DSM 792 / JCM 1419 / IAM 19013 / LMG 5710 / NBRC 13948 / NRRL B-527 / VKM B-1787 / 2291 / W)</name>
    <dbReference type="NCBI Taxonomy" id="272562"/>
    <lineage>
        <taxon>Bacteria</taxon>
        <taxon>Bacillati</taxon>
        <taxon>Bacillota</taxon>
        <taxon>Clostridia</taxon>
        <taxon>Eubacteriales</taxon>
        <taxon>Clostridiaceae</taxon>
        <taxon>Clostridium</taxon>
    </lineage>
</organism>
<sequence>MEKIALITDSTSDVDKDMIEKYDIKVLPLRIIYKDKEYIDRVTISPREVYDNLHIEVPSTSLPSMGDMESLYEKLEAEGYTHVIGVTISSNLSGTYNSLKLVSEGHENIKSFIFDSRSITMGEGAIIKECGEMILQGKNFDYIVEKMPKMRENIKVYYIVDTLKYLIKGGRIGKVSGTVGQLLDIKPIISINEEGVYYTHCKAKGKKQAIKKLIEILRRTLSEKHCDIWVMHGGAYDEIDKLKDLVSGIENINNLNSGEISPVAGVHTGPGLLGVVIFKK</sequence>
<gene>
    <name type="ordered locus">CA_C1624</name>
</gene>
<comment type="function">
    <text evidence="1">May bind long-chain fatty acids, such as palmitate, and may play a role in lipid transport or fatty acid metabolism.</text>
</comment>
<name>Y1624_CLOAB</name>
<accession>Q97IL6</accession>
<evidence type="ECO:0000250" key="1"/>
<evidence type="ECO:0000250" key="2">
    <source>
        <dbReference type="UniProtKB" id="Q9X1H9"/>
    </source>
</evidence>
<evidence type="ECO:0000255" key="3">
    <source>
        <dbReference type="PROSITE-ProRule" id="PRU00815"/>
    </source>
</evidence>
<reference key="1">
    <citation type="journal article" date="2001" name="J. Bacteriol.">
        <title>Genome sequence and comparative analysis of the solvent-producing bacterium Clostridium acetobutylicum.</title>
        <authorList>
            <person name="Noelling J."/>
            <person name="Breton G."/>
            <person name="Omelchenko M.V."/>
            <person name="Makarova K.S."/>
            <person name="Zeng Q."/>
            <person name="Gibson R."/>
            <person name="Lee H.M."/>
            <person name="Dubois J."/>
            <person name="Qiu D."/>
            <person name="Hitti J."/>
            <person name="Wolf Y.I."/>
            <person name="Tatusov R.L."/>
            <person name="Sabathe F."/>
            <person name="Doucette-Stamm L.A."/>
            <person name="Soucaille P."/>
            <person name="Daly M.J."/>
            <person name="Bennett G.N."/>
            <person name="Koonin E.V."/>
            <person name="Smith D.R."/>
        </authorList>
    </citation>
    <scope>NUCLEOTIDE SEQUENCE [LARGE SCALE GENOMIC DNA]</scope>
    <source>
        <strain>ATCC 824 / DSM 792 / JCM 1419 / IAM 19013 / LMG 5710 / NBRC 13948 / NRRL B-527 / VKM B-1787 / 2291 / W</strain>
    </source>
</reference>